<reference key="1">
    <citation type="journal article" date="1995" name="J. Bacteriol.">
        <title>Strong function-related homology between the pore-forming colicins K and 5.</title>
        <authorList>
            <person name="Pilsl H."/>
            <person name="Braun V."/>
        </authorList>
    </citation>
    <scope>NUCLEOTIDE SEQUENCE [GENOMIC DNA]</scope>
    <source>
        <strain>ATCC 35324 / ECOR 5</strain>
        <strain>K49</strain>
    </source>
</reference>
<reference key="2">
    <citation type="submission" date="1995-05" db="EMBL/GenBank/DDBJ databases">
        <authorList>
            <person name="Izard J."/>
            <person name="Chartier M."/>
            <person name="Baty D."/>
        </authorList>
    </citation>
    <scope>NUCLEOTIDE SEQUENCE [GENOMIC DNA]</scope>
</reference>
<protein>
    <recommendedName>
        <fullName>Colicin-K immunity protein</fullName>
    </recommendedName>
</protein>
<dbReference type="EMBL" id="X87834">
    <property type="protein sequence ID" value="CAA61100.1"/>
    <property type="molecule type" value="Genomic_DNA"/>
</dbReference>
<dbReference type="EMBL" id="X87835">
    <property type="protein sequence ID" value="CAA61103.1"/>
    <property type="molecule type" value="Genomic_DNA"/>
</dbReference>
<dbReference type="EMBL" id="U27452">
    <property type="protein sequence ID" value="AAB41289.1"/>
    <property type="molecule type" value="Genomic_DNA"/>
</dbReference>
<dbReference type="RefSeq" id="WP_011264161.1">
    <property type="nucleotide sequence ID" value="NZ_WVVZ01000067.1"/>
</dbReference>
<dbReference type="RefSeq" id="YP_214173.1">
    <property type="nucleotide sequence ID" value="NC_006881.1"/>
</dbReference>
<dbReference type="GO" id="GO:0005886">
    <property type="term" value="C:plasma membrane"/>
    <property type="evidence" value="ECO:0007669"/>
    <property type="project" value="UniProtKB-SubCell"/>
</dbReference>
<dbReference type="GO" id="GO:0030153">
    <property type="term" value="P:bacteriocin immunity"/>
    <property type="evidence" value="ECO:0007669"/>
    <property type="project" value="UniProtKB-KW"/>
</dbReference>
<dbReference type="InterPro" id="IPR035265">
    <property type="entry name" value="Colicin-K_immunity"/>
</dbReference>
<dbReference type="Pfam" id="PF17500">
    <property type="entry name" value="CKI"/>
    <property type="match status" value="1"/>
</dbReference>
<evidence type="ECO:0000255" key="1"/>
<evidence type="ECO:0000305" key="2"/>
<name>IMMK_ECOLX</name>
<keyword id="KW-0079">Bacteriocin immunity</keyword>
<keyword id="KW-1003">Cell membrane</keyword>
<keyword id="KW-0472">Membrane</keyword>
<keyword id="KW-0614">Plasmid</keyword>
<keyword id="KW-0812">Transmembrane</keyword>
<keyword id="KW-1133">Transmembrane helix</keyword>
<sequence>MHLKYYLHNLPESLIPWILILIFNDNDNTPLLFIFISSIHVLLYPYSKLTISRYIKENTKLKKEPWYLCKLSALFYLLMAIPVGLPSFIYYTLKRN</sequence>
<feature type="chain" id="PRO_0000218692" description="Colicin-K immunity protein">
    <location>
        <begin position="1"/>
        <end position="96"/>
    </location>
</feature>
<feature type="transmembrane region" description="Helical" evidence="1">
    <location>
        <begin position="73"/>
        <end position="93"/>
    </location>
</feature>
<organism>
    <name type="scientific">Escherichia coli</name>
    <dbReference type="NCBI Taxonomy" id="562"/>
    <lineage>
        <taxon>Bacteria</taxon>
        <taxon>Pseudomonadati</taxon>
        <taxon>Pseudomonadota</taxon>
        <taxon>Gammaproteobacteria</taxon>
        <taxon>Enterobacterales</taxon>
        <taxon>Enterobacteriaceae</taxon>
        <taxon>Escherichia</taxon>
    </lineage>
</organism>
<geneLocation type="plasmid">
    <name>ColK-K235</name>
</geneLocation>
<proteinExistence type="predicted"/>
<gene>
    <name type="primary">cki</name>
    <name type="synonym">cfi</name>
</gene>
<accession>Q47503</accession>
<accession>Q46784</accession>
<accession>Q47501</accession>
<comment type="function">
    <text>This protein is able to protect a cell, which harbors the plasmid ColK encoding colicin K, against colicin K.</text>
</comment>
<comment type="subcellular location">
    <subcellularLocation>
        <location evidence="2">Cell membrane</location>
        <topology evidence="2">Single-pass membrane protein</topology>
    </subcellularLocation>
</comment>